<dbReference type="EC" id="2.1.1.67" evidence="1"/>
<dbReference type="EMBL" id="CP000681">
    <property type="protein sequence ID" value="ABP77008.1"/>
    <property type="molecule type" value="Genomic_DNA"/>
</dbReference>
<dbReference type="SMR" id="A4YAM5"/>
<dbReference type="STRING" id="319224.Sputcn32_3296"/>
<dbReference type="KEGG" id="spc:Sputcn32_3296"/>
<dbReference type="eggNOG" id="COG0500">
    <property type="taxonomic scope" value="Bacteria"/>
</dbReference>
<dbReference type="HOGENOM" id="CLU_085515_1_0_6"/>
<dbReference type="GO" id="GO:0005737">
    <property type="term" value="C:cytoplasm"/>
    <property type="evidence" value="ECO:0007669"/>
    <property type="project" value="UniProtKB-SubCell"/>
</dbReference>
<dbReference type="GO" id="GO:0008119">
    <property type="term" value="F:thiopurine S-methyltransferase activity"/>
    <property type="evidence" value="ECO:0007669"/>
    <property type="project" value="UniProtKB-UniRule"/>
</dbReference>
<dbReference type="GO" id="GO:0032259">
    <property type="term" value="P:methylation"/>
    <property type="evidence" value="ECO:0007669"/>
    <property type="project" value="UniProtKB-KW"/>
</dbReference>
<dbReference type="GO" id="GO:0010038">
    <property type="term" value="P:response to metal ion"/>
    <property type="evidence" value="ECO:0007669"/>
    <property type="project" value="InterPro"/>
</dbReference>
<dbReference type="FunFam" id="3.40.50.150:FF:000101">
    <property type="entry name" value="Thiopurine S-methyltransferase"/>
    <property type="match status" value="1"/>
</dbReference>
<dbReference type="Gene3D" id="3.40.50.150">
    <property type="entry name" value="Vaccinia Virus protein VP39"/>
    <property type="match status" value="1"/>
</dbReference>
<dbReference type="HAMAP" id="MF_00812">
    <property type="entry name" value="Thiopur_methtran"/>
    <property type="match status" value="1"/>
</dbReference>
<dbReference type="InterPro" id="IPR029063">
    <property type="entry name" value="SAM-dependent_MTases_sf"/>
</dbReference>
<dbReference type="InterPro" id="IPR022474">
    <property type="entry name" value="Thiopur_S-MeTfrase_Se/Te_detox"/>
</dbReference>
<dbReference type="InterPro" id="IPR025835">
    <property type="entry name" value="Thiopurine_S-MeTrfase"/>
</dbReference>
<dbReference type="InterPro" id="IPR008854">
    <property type="entry name" value="TPMT"/>
</dbReference>
<dbReference type="NCBIfam" id="NF009732">
    <property type="entry name" value="PRK13255.1"/>
    <property type="match status" value="1"/>
</dbReference>
<dbReference type="NCBIfam" id="TIGR03840">
    <property type="entry name" value="TMPT_Se_Te"/>
    <property type="match status" value="1"/>
</dbReference>
<dbReference type="PANTHER" id="PTHR10259">
    <property type="entry name" value="THIOPURINE S-METHYLTRANSFERASE"/>
    <property type="match status" value="1"/>
</dbReference>
<dbReference type="PANTHER" id="PTHR10259:SF11">
    <property type="entry name" value="THIOPURINE S-METHYLTRANSFERASE"/>
    <property type="match status" value="1"/>
</dbReference>
<dbReference type="Pfam" id="PF05724">
    <property type="entry name" value="TPMT"/>
    <property type="match status" value="1"/>
</dbReference>
<dbReference type="PIRSF" id="PIRSF023956">
    <property type="entry name" value="Thiopurine_S-methyltransferase"/>
    <property type="match status" value="1"/>
</dbReference>
<dbReference type="SUPFAM" id="SSF53335">
    <property type="entry name" value="S-adenosyl-L-methionine-dependent methyltransferases"/>
    <property type="match status" value="1"/>
</dbReference>
<dbReference type="PROSITE" id="PS51585">
    <property type="entry name" value="SAM_MT_TPMT"/>
    <property type="match status" value="1"/>
</dbReference>
<gene>
    <name evidence="1" type="primary">tpm</name>
    <name type="ordered locus">Sputcn32_3296</name>
</gene>
<sequence length="218" mass="25117">MEPGFWHEKWYKQQIGFHQQDINPFLVQYWQRLALPAGAKVFVPLCGKSLDMCFLAEQGHQVIGCELNELAVQQFFSDNQLEMTQTVEGEHQHYQTEQVSLYQGDIFTLPKRITQDVTAFYDRAALIAWPEEMRTQYAKQLANLLPSGSLGLLVTLDYPQETLNGPPFAVSPNWIEAHLTDDFEIQVLACQDVLADNPRFVKKEVPWLNEAAYLLKRK</sequence>
<feature type="chain" id="PRO_1000047222" description="Thiopurine S-methyltransferase">
    <location>
        <begin position="1"/>
        <end position="218"/>
    </location>
</feature>
<feature type="binding site" evidence="1">
    <location>
        <position position="10"/>
    </location>
    <ligand>
        <name>S-adenosyl-L-methionine</name>
        <dbReference type="ChEBI" id="CHEBI:59789"/>
    </ligand>
</feature>
<feature type="binding site" evidence="1">
    <location>
        <position position="45"/>
    </location>
    <ligand>
        <name>S-adenosyl-L-methionine</name>
        <dbReference type="ChEBI" id="CHEBI:59789"/>
    </ligand>
</feature>
<feature type="binding site" evidence="1">
    <location>
        <position position="66"/>
    </location>
    <ligand>
        <name>S-adenosyl-L-methionine</name>
        <dbReference type="ChEBI" id="CHEBI:59789"/>
    </ligand>
</feature>
<feature type="binding site" evidence="1">
    <location>
        <position position="123"/>
    </location>
    <ligand>
        <name>S-adenosyl-L-methionine</name>
        <dbReference type="ChEBI" id="CHEBI:59789"/>
    </ligand>
</feature>
<organism>
    <name type="scientific">Shewanella putrefaciens (strain CN-32 / ATCC BAA-453)</name>
    <dbReference type="NCBI Taxonomy" id="319224"/>
    <lineage>
        <taxon>Bacteria</taxon>
        <taxon>Pseudomonadati</taxon>
        <taxon>Pseudomonadota</taxon>
        <taxon>Gammaproteobacteria</taxon>
        <taxon>Alteromonadales</taxon>
        <taxon>Shewanellaceae</taxon>
        <taxon>Shewanella</taxon>
    </lineage>
</organism>
<reference key="1">
    <citation type="submission" date="2007-04" db="EMBL/GenBank/DDBJ databases">
        <title>Complete sequence of Shewanella putrefaciens CN-32.</title>
        <authorList>
            <consortium name="US DOE Joint Genome Institute"/>
            <person name="Copeland A."/>
            <person name="Lucas S."/>
            <person name="Lapidus A."/>
            <person name="Barry K."/>
            <person name="Detter J.C."/>
            <person name="Glavina del Rio T."/>
            <person name="Hammon N."/>
            <person name="Israni S."/>
            <person name="Dalin E."/>
            <person name="Tice H."/>
            <person name="Pitluck S."/>
            <person name="Chain P."/>
            <person name="Malfatti S."/>
            <person name="Shin M."/>
            <person name="Vergez L."/>
            <person name="Schmutz J."/>
            <person name="Larimer F."/>
            <person name="Land M."/>
            <person name="Hauser L."/>
            <person name="Kyrpides N."/>
            <person name="Mikhailova N."/>
            <person name="Romine M.F."/>
            <person name="Fredrickson J."/>
            <person name="Tiedje J."/>
            <person name="Richardson P."/>
        </authorList>
    </citation>
    <scope>NUCLEOTIDE SEQUENCE [LARGE SCALE GENOMIC DNA]</scope>
    <source>
        <strain>CN-32 / ATCC BAA-453</strain>
    </source>
</reference>
<name>TPMT_SHEPC</name>
<accession>A4YAM5</accession>
<keyword id="KW-0963">Cytoplasm</keyword>
<keyword id="KW-0489">Methyltransferase</keyword>
<keyword id="KW-0949">S-adenosyl-L-methionine</keyword>
<keyword id="KW-0808">Transferase</keyword>
<protein>
    <recommendedName>
        <fullName evidence="1">Thiopurine S-methyltransferase</fullName>
        <ecNumber evidence="1">2.1.1.67</ecNumber>
    </recommendedName>
    <alternativeName>
        <fullName evidence="1">Thiopurine methyltransferase</fullName>
    </alternativeName>
</protein>
<evidence type="ECO:0000255" key="1">
    <source>
        <dbReference type="HAMAP-Rule" id="MF_00812"/>
    </source>
</evidence>
<proteinExistence type="inferred from homology"/>
<comment type="catalytic activity">
    <reaction evidence="1">
        <text>S-adenosyl-L-methionine + a thiopurine = S-adenosyl-L-homocysteine + a thiopurine S-methylether.</text>
        <dbReference type="EC" id="2.1.1.67"/>
    </reaction>
</comment>
<comment type="subcellular location">
    <subcellularLocation>
        <location evidence="1">Cytoplasm</location>
    </subcellularLocation>
</comment>
<comment type="similarity">
    <text evidence="1">Belongs to the class I-like SAM-binding methyltransferase superfamily. TPMT family.</text>
</comment>